<organism>
    <name type="scientific">Leifsonia xyli subsp. xyli (strain CTCB07)</name>
    <dbReference type="NCBI Taxonomy" id="281090"/>
    <lineage>
        <taxon>Bacteria</taxon>
        <taxon>Bacillati</taxon>
        <taxon>Actinomycetota</taxon>
        <taxon>Actinomycetes</taxon>
        <taxon>Micrococcales</taxon>
        <taxon>Microbacteriaceae</taxon>
        <taxon>Leifsonia</taxon>
    </lineage>
</organism>
<sequence length="337" mass="36728">MRGLLQDIPVRGQKRVLLAAPRGYCAGVDRAVIAVEKALERYGAPVYVRKQIVHNIHVVSELERQGAIFVDEVDEVPEGAHIVFSAHGVSPAVVAAAADRGLRAIDATCPLVTKVHREAVRFARDDFEILLIGHEGHEEVEGTAGHAPERVTLVNSPDEADTIEVKDPDRVVWLSQTTLSVDETMETVRRLRERFPNLQNPPSDDICYATQNRQVAIKKVAQSADLVIVVGSANSSNSVRLVEVALEYGAKAAYRVDYASEIRQEWLDGVATVGVTSGASVPEVLVQEVLADLAGAGYADVQEVKTAEEDLMFSLPKELRKDIAGKRDERALGGRRS</sequence>
<name>ISPH_LEIXX</name>
<proteinExistence type="inferred from homology"/>
<comment type="function">
    <text evidence="1">Catalyzes the conversion of 1-hydroxy-2-methyl-2-(E)-butenyl 4-diphosphate (HMBPP) into a mixture of isopentenyl diphosphate (IPP) and dimethylallyl diphosphate (DMAPP). Acts in the terminal step of the DOXP/MEP pathway for isoprenoid precursor biosynthesis.</text>
</comment>
<comment type="catalytic activity">
    <reaction evidence="1">
        <text>isopentenyl diphosphate + 2 oxidized [2Fe-2S]-[ferredoxin] + H2O = (2E)-4-hydroxy-3-methylbut-2-enyl diphosphate + 2 reduced [2Fe-2S]-[ferredoxin] + 2 H(+)</text>
        <dbReference type="Rhea" id="RHEA:24488"/>
        <dbReference type="Rhea" id="RHEA-COMP:10000"/>
        <dbReference type="Rhea" id="RHEA-COMP:10001"/>
        <dbReference type="ChEBI" id="CHEBI:15377"/>
        <dbReference type="ChEBI" id="CHEBI:15378"/>
        <dbReference type="ChEBI" id="CHEBI:33737"/>
        <dbReference type="ChEBI" id="CHEBI:33738"/>
        <dbReference type="ChEBI" id="CHEBI:128753"/>
        <dbReference type="ChEBI" id="CHEBI:128769"/>
        <dbReference type="EC" id="1.17.7.4"/>
    </reaction>
</comment>
<comment type="catalytic activity">
    <reaction evidence="1">
        <text>dimethylallyl diphosphate + 2 oxidized [2Fe-2S]-[ferredoxin] + H2O = (2E)-4-hydroxy-3-methylbut-2-enyl diphosphate + 2 reduced [2Fe-2S]-[ferredoxin] + 2 H(+)</text>
        <dbReference type="Rhea" id="RHEA:24825"/>
        <dbReference type="Rhea" id="RHEA-COMP:10000"/>
        <dbReference type="Rhea" id="RHEA-COMP:10001"/>
        <dbReference type="ChEBI" id="CHEBI:15377"/>
        <dbReference type="ChEBI" id="CHEBI:15378"/>
        <dbReference type="ChEBI" id="CHEBI:33737"/>
        <dbReference type="ChEBI" id="CHEBI:33738"/>
        <dbReference type="ChEBI" id="CHEBI:57623"/>
        <dbReference type="ChEBI" id="CHEBI:128753"/>
        <dbReference type="EC" id="1.17.7.4"/>
    </reaction>
</comment>
<comment type="cofactor">
    <cofactor evidence="1">
        <name>[4Fe-4S] cluster</name>
        <dbReference type="ChEBI" id="CHEBI:49883"/>
    </cofactor>
    <text evidence="1">Binds 1 [4Fe-4S] cluster per subunit.</text>
</comment>
<comment type="pathway">
    <text evidence="1">Isoprenoid biosynthesis; dimethylallyl diphosphate biosynthesis; dimethylallyl diphosphate from (2E)-4-hydroxy-3-methylbutenyl diphosphate: step 1/1.</text>
</comment>
<comment type="pathway">
    <text evidence="1">Isoprenoid biosynthesis; isopentenyl diphosphate biosynthesis via DXP pathway; isopentenyl diphosphate from 1-deoxy-D-xylulose 5-phosphate: step 6/6.</text>
</comment>
<comment type="similarity">
    <text evidence="1">Belongs to the IspH family.</text>
</comment>
<reference key="1">
    <citation type="journal article" date="2004" name="Mol. Plant Microbe Interact.">
        <title>The genome sequence of the Gram-positive sugarcane pathogen Leifsonia xyli subsp. xyli.</title>
        <authorList>
            <person name="Monteiro-Vitorello C.B."/>
            <person name="Camargo L.E.A."/>
            <person name="Van Sluys M.A."/>
            <person name="Kitajima J.P."/>
            <person name="Truffi D."/>
            <person name="do Amaral A.M."/>
            <person name="Harakava R."/>
            <person name="de Oliveira J.C.F."/>
            <person name="Wood D."/>
            <person name="de Oliveira M.C."/>
            <person name="Miyaki C.Y."/>
            <person name="Takita M.A."/>
            <person name="da Silva A.C.R."/>
            <person name="Furlan L.R."/>
            <person name="Carraro D.M."/>
            <person name="Camarotte G."/>
            <person name="Almeida N.F. Jr."/>
            <person name="Carrer H."/>
            <person name="Coutinho L.L."/>
            <person name="El-Dorry H.A."/>
            <person name="Ferro M.I.T."/>
            <person name="Gagliardi P.R."/>
            <person name="Giglioti E."/>
            <person name="Goldman M.H.S."/>
            <person name="Goldman G.H."/>
            <person name="Kimura E.T."/>
            <person name="Ferro E.S."/>
            <person name="Kuramae E.E."/>
            <person name="Lemos E.G.M."/>
            <person name="Lemos M.V.F."/>
            <person name="Mauro S.M.Z."/>
            <person name="Machado M.A."/>
            <person name="Marino C.L."/>
            <person name="Menck C.F."/>
            <person name="Nunes L.R."/>
            <person name="Oliveira R.C."/>
            <person name="Pereira G.G."/>
            <person name="Siqueira W."/>
            <person name="de Souza A.A."/>
            <person name="Tsai S.M."/>
            <person name="Zanca A.S."/>
            <person name="Simpson A.J.G."/>
            <person name="Brumbley S.M."/>
            <person name="Setubal J.C."/>
        </authorList>
    </citation>
    <scope>NUCLEOTIDE SEQUENCE [LARGE SCALE GENOMIC DNA]</scope>
    <source>
        <strain>CTCB07</strain>
    </source>
</reference>
<dbReference type="EC" id="1.17.7.4" evidence="1"/>
<dbReference type="EMBL" id="AE016822">
    <property type="protein sequence ID" value="AAT89446.1"/>
    <property type="molecule type" value="Genomic_DNA"/>
</dbReference>
<dbReference type="SMR" id="Q6ADV0"/>
<dbReference type="STRING" id="281090.Lxx16760"/>
<dbReference type="KEGG" id="lxx:Lxx16760"/>
<dbReference type="eggNOG" id="COG0761">
    <property type="taxonomic scope" value="Bacteria"/>
</dbReference>
<dbReference type="HOGENOM" id="CLU_027486_1_0_11"/>
<dbReference type="UniPathway" id="UPA00056">
    <property type="reaction ID" value="UER00097"/>
</dbReference>
<dbReference type="UniPathway" id="UPA00059">
    <property type="reaction ID" value="UER00105"/>
</dbReference>
<dbReference type="Proteomes" id="UP000001306">
    <property type="component" value="Chromosome"/>
</dbReference>
<dbReference type="GO" id="GO:0051539">
    <property type="term" value="F:4 iron, 4 sulfur cluster binding"/>
    <property type="evidence" value="ECO:0007669"/>
    <property type="project" value="UniProtKB-UniRule"/>
</dbReference>
<dbReference type="GO" id="GO:0051745">
    <property type="term" value="F:4-hydroxy-3-methylbut-2-enyl diphosphate reductase activity"/>
    <property type="evidence" value="ECO:0007669"/>
    <property type="project" value="UniProtKB-UniRule"/>
</dbReference>
<dbReference type="GO" id="GO:0046872">
    <property type="term" value="F:metal ion binding"/>
    <property type="evidence" value="ECO:0007669"/>
    <property type="project" value="UniProtKB-KW"/>
</dbReference>
<dbReference type="GO" id="GO:0050992">
    <property type="term" value="P:dimethylallyl diphosphate biosynthetic process"/>
    <property type="evidence" value="ECO:0007669"/>
    <property type="project" value="UniProtKB-UniRule"/>
</dbReference>
<dbReference type="GO" id="GO:0019288">
    <property type="term" value="P:isopentenyl diphosphate biosynthetic process, methylerythritol 4-phosphate pathway"/>
    <property type="evidence" value="ECO:0007669"/>
    <property type="project" value="UniProtKB-UniRule"/>
</dbReference>
<dbReference type="GO" id="GO:0016114">
    <property type="term" value="P:terpenoid biosynthetic process"/>
    <property type="evidence" value="ECO:0007669"/>
    <property type="project" value="UniProtKB-UniRule"/>
</dbReference>
<dbReference type="CDD" id="cd13944">
    <property type="entry name" value="lytB_ispH"/>
    <property type="match status" value="1"/>
</dbReference>
<dbReference type="Gene3D" id="3.40.50.11270">
    <property type="match status" value="1"/>
</dbReference>
<dbReference type="Gene3D" id="3.40.1010.20">
    <property type="entry name" value="4-hydroxy-3-methylbut-2-enyl diphosphate reductase, catalytic domain"/>
    <property type="match status" value="2"/>
</dbReference>
<dbReference type="HAMAP" id="MF_00191">
    <property type="entry name" value="IspH"/>
    <property type="match status" value="1"/>
</dbReference>
<dbReference type="InterPro" id="IPR003451">
    <property type="entry name" value="LytB/IspH"/>
</dbReference>
<dbReference type="NCBIfam" id="TIGR00216">
    <property type="entry name" value="ispH_lytB"/>
    <property type="match status" value="1"/>
</dbReference>
<dbReference type="NCBIfam" id="NF002189">
    <property type="entry name" value="PRK01045.1-3"/>
    <property type="match status" value="1"/>
</dbReference>
<dbReference type="NCBIfam" id="NF002190">
    <property type="entry name" value="PRK01045.1-4"/>
    <property type="match status" value="1"/>
</dbReference>
<dbReference type="PANTHER" id="PTHR30426">
    <property type="entry name" value="4-HYDROXY-3-METHYLBUT-2-ENYL DIPHOSPHATE REDUCTASE"/>
    <property type="match status" value="1"/>
</dbReference>
<dbReference type="PANTHER" id="PTHR30426:SF0">
    <property type="entry name" value="4-HYDROXY-3-METHYLBUT-2-ENYL DIPHOSPHATE REDUCTASE"/>
    <property type="match status" value="1"/>
</dbReference>
<dbReference type="Pfam" id="PF02401">
    <property type="entry name" value="LYTB"/>
    <property type="match status" value="1"/>
</dbReference>
<protein>
    <recommendedName>
        <fullName evidence="1">4-hydroxy-3-methylbut-2-enyl diphosphate reductase</fullName>
        <shortName evidence="1">HMBPP reductase</shortName>
        <ecNumber evidence="1">1.17.7.4</ecNumber>
    </recommendedName>
</protein>
<feature type="chain" id="PRO_0000128829" description="4-hydroxy-3-methylbut-2-enyl diphosphate reductase">
    <location>
        <begin position="1"/>
        <end position="337"/>
    </location>
</feature>
<feature type="active site" description="Proton donor" evidence="1">
    <location>
        <position position="139"/>
    </location>
</feature>
<feature type="binding site" evidence="1">
    <location>
        <position position="25"/>
    </location>
    <ligand>
        <name>[4Fe-4S] cluster</name>
        <dbReference type="ChEBI" id="CHEBI:49883"/>
    </ligand>
</feature>
<feature type="binding site" evidence="1">
    <location>
        <position position="54"/>
    </location>
    <ligand>
        <name>(2E)-4-hydroxy-3-methylbut-2-enyl diphosphate</name>
        <dbReference type="ChEBI" id="CHEBI:128753"/>
    </ligand>
</feature>
<feature type="binding site" evidence="1">
    <location>
        <position position="54"/>
    </location>
    <ligand>
        <name>dimethylallyl diphosphate</name>
        <dbReference type="ChEBI" id="CHEBI:57623"/>
    </ligand>
</feature>
<feature type="binding site" evidence="1">
    <location>
        <position position="54"/>
    </location>
    <ligand>
        <name>isopentenyl diphosphate</name>
        <dbReference type="ChEBI" id="CHEBI:128769"/>
    </ligand>
</feature>
<feature type="binding site" evidence="1">
    <location>
        <position position="87"/>
    </location>
    <ligand>
        <name>(2E)-4-hydroxy-3-methylbut-2-enyl diphosphate</name>
        <dbReference type="ChEBI" id="CHEBI:128753"/>
    </ligand>
</feature>
<feature type="binding site" evidence="1">
    <location>
        <position position="87"/>
    </location>
    <ligand>
        <name>dimethylallyl diphosphate</name>
        <dbReference type="ChEBI" id="CHEBI:57623"/>
    </ligand>
</feature>
<feature type="binding site" evidence="1">
    <location>
        <position position="87"/>
    </location>
    <ligand>
        <name>isopentenyl diphosphate</name>
        <dbReference type="ChEBI" id="CHEBI:128769"/>
    </ligand>
</feature>
<feature type="binding site" evidence="1">
    <location>
        <position position="109"/>
    </location>
    <ligand>
        <name>[4Fe-4S] cluster</name>
        <dbReference type="ChEBI" id="CHEBI:49883"/>
    </ligand>
</feature>
<feature type="binding site" evidence="1">
    <location>
        <position position="137"/>
    </location>
    <ligand>
        <name>(2E)-4-hydroxy-3-methylbut-2-enyl diphosphate</name>
        <dbReference type="ChEBI" id="CHEBI:128753"/>
    </ligand>
</feature>
<feature type="binding site" evidence="1">
    <location>
        <position position="137"/>
    </location>
    <ligand>
        <name>dimethylallyl diphosphate</name>
        <dbReference type="ChEBI" id="CHEBI:57623"/>
    </ligand>
</feature>
<feature type="binding site" evidence="1">
    <location>
        <position position="137"/>
    </location>
    <ligand>
        <name>isopentenyl diphosphate</name>
        <dbReference type="ChEBI" id="CHEBI:128769"/>
    </ligand>
</feature>
<feature type="binding site" evidence="1">
    <location>
        <position position="177"/>
    </location>
    <ligand>
        <name>(2E)-4-hydroxy-3-methylbut-2-enyl diphosphate</name>
        <dbReference type="ChEBI" id="CHEBI:128753"/>
    </ligand>
</feature>
<feature type="binding site" evidence="1">
    <location>
        <position position="207"/>
    </location>
    <ligand>
        <name>[4Fe-4S] cluster</name>
        <dbReference type="ChEBI" id="CHEBI:49883"/>
    </ligand>
</feature>
<feature type="binding site" evidence="1">
    <location>
        <position position="235"/>
    </location>
    <ligand>
        <name>(2E)-4-hydroxy-3-methylbut-2-enyl diphosphate</name>
        <dbReference type="ChEBI" id="CHEBI:128753"/>
    </ligand>
</feature>
<feature type="binding site" evidence="1">
    <location>
        <position position="235"/>
    </location>
    <ligand>
        <name>dimethylallyl diphosphate</name>
        <dbReference type="ChEBI" id="CHEBI:57623"/>
    </ligand>
</feature>
<feature type="binding site" evidence="1">
    <location>
        <position position="235"/>
    </location>
    <ligand>
        <name>isopentenyl diphosphate</name>
        <dbReference type="ChEBI" id="CHEBI:128769"/>
    </ligand>
</feature>
<feature type="binding site" evidence="1">
    <location>
        <position position="236"/>
    </location>
    <ligand>
        <name>(2E)-4-hydroxy-3-methylbut-2-enyl diphosphate</name>
        <dbReference type="ChEBI" id="CHEBI:128753"/>
    </ligand>
</feature>
<feature type="binding site" evidence="1">
    <location>
        <position position="236"/>
    </location>
    <ligand>
        <name>dimethylallyl diphosphate</name>
        <dbReference type="ChEBI" id="CHEBI:57623"/>
    </ligand>
</feature>
<feature type="binding site" evidence="1">
    <location>
        <position position="236"/>
    </location>
    <ligand>
        <name>isopentenyl diphosphate</name>
        <dbReference type="ChEBI" id="CHEBI:128769"/>
    </ligand>
</feature>
<feature type="binding site" evidence="1">
    <location>
        <position position="237"/>
    </location>
    <ligand>
        <name>(2E)-4-hydroxy-3-methylbut-2-enyl diphosphate</name>
        <dbReference type="ChEBI" id="CHEBI:128753"/>
    </ligand>
</feature>
<feature type="binding site" evidence="1">
    <location>
        <position position="237"/>
    </location>
    <ligand>
        <name>dimethylallyl diphosphate</name>
        <dbReference type="ChEBI" id="CHEBI:57623"/>
    </ligand>
</feature>
<feature type="binding site" evidence="1">
    <location>
        <position position="237"/>
    </location>
    <ligand>
        <name>isopentenyl diphosphate</name>
        <dbReference type="ChEBI" id="CHEBI:128769"/>
    </ligand>
</feature>
<feature type="binding site" evidence="1">
    <location>
        <position position="280"/>
    </location>
    <ligand>
        <name>(2E)-4-hydroxy-3-methylbut-2-enyl diphosphate</name>
        <dbReference type="ChEBI" id="CHEBI:128753"/>
    </ligand>
</feature>
<feature type="binding site" evidence="1">
    <location>
        <position position="280"/>
    </location>
    <ligand>
        <name>dimethylallyl diphosphate</name>
        <dbReference type="ChEBI" id="CHEBI:57623"/>
    </ligand>
</feature>
<feature type="binding site" evidence="1">
    <location>
        <position position="280"/>
    </location>
    <ligand>
        <name>isopentenyl diphosphate</name>
        <dbReference type="ChEBI" id="CHEBI:128769"/>
    </ligand>
</feature>
<keyword id="KW-0004">4Fe-4S</keyword>
<keyword id="KW-0408">Iron</keyword>
<keyword id="KW-0411">Iron-sulfur</keyword>
<keyword id="KW-0414">Isoprene biosynthesis</keyword>
<keyword id="KW-0479">Metal-binding</keyword>
<keyword id="KW-0560">Oxidoreductase</keyword>
<keyword id="KW-1185">Reference proteome</keyword>
<evidence type="ECO:0000255" key="1">
    <source>
        <dbReference type="HAMAP-Rule" id="MF_00191"/>
    </source>
</evidence>
<gene>
    <name evidence="1" type="primary">ispH</name>
    <name type="synonym">lytB</name>
    <name type="ordered locus">Lxx16760</name>
</gene>
<accession>Q6ADV0</accession>